<sequence>MSEQESLRCSSARNRGGVQRVEGKLRASVEKGDYYEAHQMYRTLYFRYMSQAKHAEARELMYNGALLFFSYNQQNSAADLSMLVLEVLEKSKGKVEDEILECLVKLFSLMDQNSPERVAFVSRALKWSTGGSGKLGHPRLHQLLALTLWKEQNYSESXYHFLHSSDGEGCAQMLVEYSASRGFHSEVDMFVAQAVLQFLCLKNKNGASVVXSTYTEKHPSIEKGPPFVQPLLNFIWFLLLAVDGGKLTVFTVLCEQYKPSLKRDPMYNEYLDRIGQLFFGVPPKQSPSYGGLLGNLLNSLMGSGEEDDMAEEAQEDSSPIELD</sequence>
<name>GET4_TAKRU</name>
<evidence type="ECO:0000250" key="1">
    <source>
        <dbReference type="UniProtKB" id="Q7L5D6"/>
    </source>
</evidence>
<evidence type="ECO:0000256" key="2">
    <source>
        <dbReference type="SAM" id="MobiDB-lite"/>
    </source>
</evidence>
<evidence type="ECO:0000305" key="3"/>
<reference key="1">
    <citation type="journal article" date="2008" name="Genomics">
        <title>Genomic, evolutionary, and expression analyses of cee, an ancient gene involved in normal growth and development.</title>
        <authorList>
            <person name="Fernandes J.M.O."/>
            <person name="Macqueen D.J."/>
            <person name="Lee H.-T."/>
            <person name="Johnston I.A."/>
        </authorList>
    </citation>
    <scope>NUCLEOTIDE SEQUENCE [MRNA]</scope>
</reference>
<accession>A4GWN3</accession>
<organism>
    <name type="scientific">Takifugu rubripes</name>
    <name type="common">Japanese pufferfish</name>
    <name type="synonym">Fugu rubripes</name>
    <dbReference type="NCBI Taxonomy" id="31033"/>
    <lineage>
        <taxon>Eukaryota</taxon>
        <taxon>Metazoa</taxon>
        <taxon>Chordata</taxon>
        <taxon>Craniata</taxon>
        <taxon>Vertebrata</taxon>
        <taxon>Euteleostomi</taxon>
        <taxon>Actinopterygii</taxon>
        <taxon>Neopterygii</taxon>
        <taxon>Teleostei</taxon>
        <taxon>Neoteleostei</taxon>
        <taxon>Acanthomorphata</taxon>
        <taxon>Eupercaria</taxon>
        <taxon>Tetraodontiformes</taxon>
        <taxon>Tetradontoidea</taxon>
        <taxon>Tetraodontidae</taxon>
        <taxon>Takifugu</taxon>
    </lineage>
</organism>
<gene>
    <name type="primary">get4</name>
    <name type="synonym">cee</name>
</gene>
<protein>
    <recommendedName>
        <fullName>Golgi to ER traffic protein 4 homolog</fullName>
    </recommendedName>
    <alternativeName>
        <fullName>Conserved edge expressed protein</fullName>
    </alternativeName>
</protein>
<comment type="function">
    <text evidence="1">As part of a cytosolic protein quality control complex, the bag6/bat3 complex, maintains misfolded and hydrophobic patches-containing proteins in a soluble state and participates in their proper delivery to the endoplasmic reticulum or alternatively can promote their sorting to the proteasome where they undergo degradation. The bag6/bat3 complex is involved in the post-translational delivery of tail-anchored/type II transmembrane proteins to the endoplasmic reticulum membrane. Similarly, the bag6/bat3 complex also functions as a sorting platform for proteins of the secretory pathway that are mislocalized to the cytosol either delivering them to the proteasome for degradation or to the endoplasmic reticulum. The bag6/bat3 complex also plays a role in the endoplasmic reticulum-associated degradation (ERAD), a quality control mechanism that eliminates unwanted proteins of the endoplasmic reticulum through their retrotranslocation to the cytosol and their targeting to the proteasome. It maintains these retrotranslocated proteins in an unfolded yet soluble state condition in the cytosol to ensure their proper delivery to the proteasome.</text>
</comment>
<comment type="subunit">
    <text evidence="1">Component of the bag6/bat3 complex.</text>
</comment>
<comment type="subcellular location">
    <subcellularLocation>
        <location evidence="1">Cytoplasm</location>
        <location evidence="1">Cytosol</location>
    </subcellularLocation>
</comment>
<comment type="similarity">
    <text evidence="3">Belongs to the GET4 family.</text>
</comment>
<proteinExistence type="evidence at transcript level"/>
<dbReference type="EMBL" id="EF445943">
    <property type="protein sequence ID" value="ABO32372.1"/>
    <property type="molecule type" value="mRNA"/>
</dbReference>
<dbReference type="RefSeq" id="NP_001077091.1">
    <property type="nucleotide sequence ID" value="NM_001083622.1"/>
</dbReference>
<dbReference type="FunCoup" id="A4GWN3">
    <property type="interactions" value="1837"/>
</dbReference>
<dbReference type="STRING" id="31033.ENSTRUP00000075437"/>
<dbReference type="GeneID" id="100036576"/>
<dbReference type="KEGG" id="tru:100036576"/>
<dbReference type="CTD" id="51608"/>
<dbReference type="eggNOG" id="KOG3024">
    <property type="taxonomic scope" value="Eukaryota"/>
</dbReference>
<dbReference type="InParanoid" id="A4GWN3"/>
<dbReference type="OrthoDB" id="10252405at2759"/>
<dbReference type="Proteomes" id="UP000005226">
    <property type="component" value="Unplaced"/>
</dbReference>
<dbReference type="GO" id="GO:0071818">
    <property type="term" value="C:BAT3 complex"/>
    <property type="evidence" value="ECO:0000250"/>
    <property type="project" value="UniProtKB"/>
</dbReference>
<dbReference type="GO" id="GO:0005829">
    <property type="term" value="C:cytosol"/>
    <property type="evidence" value="ECO:0000250"/>
    <property type="project" value="UniProtKB"/>
</dbReference>
<dbReference type="GO" id="GO:0071816">
    <property type="term" value="P:tail-anchored membrane protein insertion into ER membrane"/>
    <property type="evidence" value="ECO:0000250"/>
    <property type="project" value="UniProtKB"/>
</dbReference>
<dbReference type="FunFam" id="1.25.40.10:FF:000060">
    <property type="entry name" value="Golgi to ER traffic protein 4 homolog"/>
    <property type="match status" value="1"/>
</dbReference>
<dbReference type="Gene3D" id="1.25.40.10">
    <property type="entry name" value="Tetratricopeptide repeat domain"/>
    <property type="match status" value="1"/>
</dbReference>
<dbReference type="InterPro" id="IPR007317">
    <property type="entry name" value="GET4"/>
</dbReference>
<dbReference type="InterPro" id="IPR011990">
    <property type="entry name" value="TPR-like_helical_dom_sf"/>
</dbReference>
<dbReference type="PANTHER" id="PTHR12875">
    <property type="entry name" value="GOLGI TO ER TRAFFIC PROTEIN 4 HOMOLOG"/>
    <property type="match status" value="1"/>
</dbReference>
<dbReference type="PANTHER" id="PTHR12875:SF0">
    <property type="entry name" value="GOLGI TO ER TRAFFIC PROTEIN 4 HOMOLOG"/>
    <property type="match status" value="1"/>
</dbReference>
<dbReference type="Pfam" id="PF04190">
    <property type="entry name" value="GET4"/>
    <property type="match status" value="1"/>
</dbReference>
<feature type="chain" id="PRO_0000403723" description="Golgi to ER traffic protein 4 homolog">
    <location>
        <begin position="1"/>
        <end position="323"/>
    </location>
</feature>
<feature type="region of interest" description="Disordered" evidence="2">
    <location>
        <begin position="303"/>
        <end position="323"/>
    </location>
</feature>
<feature type="compositionally biased region" description="Acidic residues" evidence="2">
    <location>
        <begin position="304"/>
        <end position="315"/>
    </location>
</feature>
<keyword id="KW-0963">Cytoplasm</keyword>
<keyword id="KW-1185">Reference proteome</keyword>
<keyword id="KW-0813">Transport</keyword>